<name>SMCO4_HUMAN</name>
<gene>
    <name type="primary">SMCO4</name>
    <name type="synonym">C11orf75</name>
    <name type="synonym">FN5</name>
</gene>
<organism>
    <name type="scientific">Homo sapiens</name>
    <name type="common">Human</name>
    <dbReference type="NCBI Taxonomy" id="9606"/>
    <lineage>
        <taxon>Eukaryota</taxon>
        <taxon>Metazoa</taxon>
        <taxon>Chordata</taxon>
        <taxon>Craniata</taxon>
        <taxon>Vertebrata</taxon>
        <taxon>Euteleostomi</taxon>
        <taxon>Mammalia</taxon>
        <taxon>Eutheria</taxon>
        <taxon>Euarchontoglires</taxon>
        <taxon>Primates</taxon>
        <taxon>Haplorrhini</taxon>
        <taxon>Catarrhini</taxon>
        <taxon>Hominidae</taxon>
        <taxon>Homo</taxon>
    </lineage>
</organism>
<comment type="interaction">
    <interactant intactId="EBI-8640191">
        <id>Q9NRQ5</id>
    </interactant>
    <interactant intactId="EBI-13059134">
        <id>Q13520</id>
        <label>AQP6</label>
    </interactant>
    <organismsDiffer>false</organismsDiffer>
    <experiments>3</experiments>
</comment>
<comment type="interaction">
    <interactant intactId="EBI-8640191">
        <id>Q9NRQ5</id>
    </interactant>
    <interactant intactId="EBI-849893">
        <id>O60238</id>
        <label>BNIP3L</label>
    </interactant>
    <organismsDiffer>false</organismsDiffer>
    <experiments>7</experiments>
</comment>
<comment type="interaction">
    <interactant intactId="EBI-8640191">
        <id>Q9NRQ5</id>
    </interactant>
    <interactant intactId="EBI-7797864">
        <id>P11912</id>
        <label>CD79A</label>
    </interactant>
    <organismsDiffer>false</organismsDiffer>
    <experiments>3</experiments>
</comment>
<comment type="interaction">
    <interactant intactId="EBI-8640191">
        <id>Q9NRQ5</id>
    </interactant>
    <interactant intactId="EBI-2873246">
        <id>Q8IUN9</id>
        <label>CLEC10A</label>
    </interactant>
    <organismsDiffer>false</organismsDiffer>
    <experiments>3</experiments>
</comment>
<comment type="interaction">
    <interactant intactId="EBI-8640191">
        <id>Q9NRQ5</id>
    </interactant>
    <interactant intactId="EBI-3924906">
        <id>Q9HBJ8</id>
        <label>CLTRN</label>
    </interactant>
    <organismsDiffer>false</organismsDiffer>
    <experiments>3</experiments>
</comment>
<comment type="interaction">
    <interactant intactId="EBI-8640191">
        <id>Q9NRQ5</id>
    </interactant>
    <interactant intactId="EBI-18013275">
        <id>Q7Z7G2</id>
        <label>CPLX4</label>
    </interactant>
    <organismsDiffer>false</organismsDiffer>
    <experiments>3</experiments>
</comment>
<comment type="interaction">
    <interactant intactId="EBI-8640191">
        <id>Q9NRQ5</id>
    </interactant>
    <interactant intactId="EBI-6942903">
        <id>Q96BA8</id>
        <label>CREB3L1</label>
    </interactant>
    <organismsDiffer>false</organismsDiffer>
    <experiments>3</experiments>
</comment>
<comment type="interaction">
    <interactant intactId="EBI-8640191">
        <id>Q9NRQ5</id>
    </interactant>
    <interactant intactId="EBI-2835281">
        <id>P25025</id>
        <label>CXCR2</label>
    </interactant>
    <organismsDiffer>false</organismsDiffer>
    <experiments>3</experiments>
</comment>
<comment type="interaction">
    <interactant intactId="EBI-8640191">
        <id>Q9NRQ5</id>
    </interactant>
    <interactant intactId="EBI-3915253">
        <id>Q15125</id>
        <label>EBP</label>
    </interactant>
    <organismsDiffer>false</organismsDiffer>
    <experiments>3</experiments>
</comment>
<comment type="interaction">
    <interactant intactId="EBI-8640191">
        <id>Q9NRQ5</id>
    </interactant>
    <interactant intactId="EBI-781551">
        <id>Q9Y282</id>
        <label>ERGIC3</label>
    </interactant>
    <organismsDiffer>false</organismsDiffer>
    <experiments>3</experiments>
</comment>
<comment type="interaction">
    <interactant intactId="EBI-8640191">
        <id>Q9NRQ5</id>
    </interactant>
    <interactant intactId="EBI-18636064">
        <id>Q8TBP5</id>
        <label>FAM174A</label>
    </interactant>
    <organismsDiffer>false</organismsDiffer>
    <experiments>3</experiments>
</comment>
<comment type="interaction">
    <interactant intactId="EBI-8640191">
        <id>Q9NRQ5</id>
    </interactant>
    <interactant intactId="EBI-18304435">
        <id>Q5JX71</id>
        <label>FAM209A</label>
    </interactant>
    <organismsDiffer>false</organismsDiffer>
    <experiments>3</experiments>
</comment>
<comment type="interaction">
    <interactant intactId="EBI-8640191">
        <id>Q9NRQ5</id>
    </interactant>
    <interactant intactId="EBI-18938272">
        <id>Q96KR6</id>
        <label>FAM210B</label>
    </interactant>
    <organismsDiffer>false</organismsDiffer>
    <experiments>3</experiments>
</comment>
<comment type="interaction">
    <interactant intactId="EBI-8640191">
        <id>Q9NRQ5</id>
    </interactant>
    <interactant intactId="EBI-2833872">
        <id>O15552</id>
        <label>FFAR2</label>
    </interactant>
    <organismsDiffer>false</organismsDiffer>
    <experiments>3</experiments>
</comment>
<comment type="interaction">
    <interactant intactId="EBI-8640191">
        <id>Q9NRQ5</id>
    </interactant>
    <interactant intactId="EBI-17458373">
        <id>P48165</id>
        <label>GJA8</label>
    </interactant>
    <organismsDiffer>false</organismsDiffer>
    <experiments>3</experiments>
</comment>
<comment type="interaction">
    <interactant intactId="EBI-8640191">
        <id>Q9NRQ5</id>
    </interactant>
    <interactant intactId="EBI-3933251">
        <id>Q9NS71</id>
        <label>GKN1</label>
    </interactant>
    <organismsDiffer>false</organismsDiffer>
    <experiments>3</experiments>
</comment>
<comment type="interaction">
    <interactant intactId="EBI-8640191">
        <id>Q9NRQ5</id>
    </interactant>
    <interactant intactId="EBI-4289554">
        <id>Q99795</id>
        <label>GPA33</label>
    </interactant>
    <organismsDiffer>false</organismsDiffer>
    <experiments>3</experiments>
</comment>
<comment type="interaction">
    <interactant intactId="EBI-8640191">
        <id>Q9NRQ5</id>
    </interactant>
    <interactant intactId="EBI-13345167">
        <id>Q8TDT2</id>
        <label>GPR152</label>
    </interactant>
    <organismsDiffer>false</organismsDiffer>
    <experiments>3</experiments>
</comment>
<comment type="interaction">
    <interactant intactId="EBI-8640191">
        <id>Q9NRQ5</id>
    </interactant>
    <interactant intactId="EBI-18076404">
        <id>O15529</id>
        <label>GPR42</label>
    </interactant>
    <organismsDiffer>false</organismsDiffer>
    <experiments>3</experiments>
</comment>
<comment type="interaction">
    <interactant intactId="EBI-8640191">
        <id>Q9NRQ5</id>
    </interactant>
    <interactant intactId="EBI-2867874">
        <id>Q9UM44</id>
        <label>HHLA2</label>
    </interactant>
    <organismsDiffer>false</organismsDiffer>
    <experiments>3</experiments>
</comment>
<comment type="interaction">
    <interactant intactId="EBI-8640191">
        <id>Q9NRQ5</id>
    </interactant>
    <interactant intactId="EBI-725421">
        <id>P32942</id>
        <label>ICAM3</label>
    </interactant>
    <organismsDiffer>false</organismsDiffer>
    <experiments>3</experiments>
</comment>
<comment type="interaction">
    <interactant intactId="EBI-8640191">
        <id>Q9NRQ5</id>
    </interactant>
    <interactant intactId="EBI-1031656">
        <id>Q13651</id>
        <label>IL10RA</label>
    </interactant>
    <organismsDiffer>false</organismsDiffer>
    <experiments>3</experiments>
</comment>
<comment type="interaction">
    <interactant intactId="EBI-8640191">
        <id>Q9NRQ5</id>
    </interactant>
    <interactant intactId="EBI-749265">
        <id>Q8N6L0</id>
        <label>KASH5</label>
    </interactant>
    <organismsDiffer>false</organismsDiffer>
    <experiments>3</experiments>
</comment>
<comment type="interaction">
    <interactant intactId="EBI-8640191">
        <id>Q9NRQ5</id>
    </interactant>
    <interactant intactId="EBI-3934936">
        <id>O95279</id>
        <label>KCNK5</label>
    </interactant>
    <organismsDiffer>false</organismsDiffer>
    <experiments>3</experiments>
</comment>
<comment type="interaction">
    <interactant intactId="EBI-8640191">
        <id>Q9NRQ5</id>
    </interactant>
    <interactant intactId="EBI-3910993">
        <id>P43629</id>
        <label>KIR3DL1</label>
    </interactant>
    <organismsDiffer>false</organismsDiffer>
    <experiments>3</experiments>
</comment>
<comment type="interaction">
    <interactant intactId="EBI-8640191">
        <id>Q9NRQ5</id>
    </interactant>
    <interactant intactId="EBI-10171697">
        <id>Q6A162</id>
        <label>KRT40</label>
    </interactant>
    <organismsDiffer>false</organismsDiffer>
    <experiments>3</experiments>
</comment>
<comment type="interaction">
    <interactant intactId="EBI-8640191">
        <id>Q9NRQ5</id>
    </interactant>
    <interactant intactId="EBI-10172290">
        <id>P60409</id>
        <label>KRTAP10-7</label>
    </interactant>
    <organismsDiffer>false</organismsDiffer>
    <experiments>3</experiments>
</comment>
<comment type="interaction">
    <interactant intactId="EBI-8640191">
        <id>Q9NRQ5</id>
    </interactant>
    <interactant intactId="EBI-750776">
        <id>O95214</id>
        <label>LEPROTL1</label>
    </interactant>
    <organismsDiffer>false</organismsDiffer>
    <experiments>3</experiments>
</comment>
<comment type="interaction">
    <interactant intactId="EBI-8640191">
        <id>Q9NRQ5</id>
    </interactant>
    <interactant intactId="EBI-11304917">
        <id>Q8N386</id>
        <label>LRRC25</label>
    </interactant>
    <organismsDiffer>false</organismsDiffer>
    <experiments>3</experiments>
</comment>
<comment type="interaction">
    <interactant intactId="EBI-8640191">
        <id>Q9NRQ5</id>
    </interactant>
    <interactant intactId="EBI-2907262">
        <id>P20645</id>
        <label>M6PR</label>
    </interactant>
    <organismsDiffer>false</organismsDiffer>
    <experiments>3</experiments>
</comment>
<comment type="interaction">
    <interactant intactId="EBI-8640191">
        <id>Q9NRQ5</id>
    </interactant>
    <interactant intactId="EBI-724754">
        <id>O14880</id>
        <label>MGST3</label>
    </interactant>
    <organismsDiffer>false</organismsDiffer>
    <experiments>3</experiments>
</comment>
<comment type="interaction">
    <interactant intactId="EBI-8640191">
        <id>Q9NRQ5</id>
    </interactant>
    <interactant intactId="EBI-12806656">
        <id>Q96HJ5</id>
        <label>MS4A3</label>
    </interactant>
    <organismsDiffer>false</organismsDiffer>
    <experiments>3</experiments>
</comment>
<comment type="interaction">
    <interactant intactId="EBI-8640191">
        <id>Q9NRQ5</id>
    </interactant>
    <interactant intactId="EBI-17263240">
        <id>P15941-11</id>
        <label>MUC1</label>
    </interactant>
    <organismsDiffer>false</organismsDiffer>
    <experiments>3</experiments>
</comment>
<comment type="interaction">
    <interactant intactId="EBI-8640191">
        <id>Q9NRQ5</id>
    </interactant>
    <interactant intactId="EBI-594836">
        <id>O00623</id>
        <label>PEX12</label>
    </interactant>
    <organismsDiffer>false</organismsDiffer>
    <experiments>3</experiments>
</comment>
<comment type="interaction">
    <interactant intactId="EBI-8640191">
        <id>Q9NRQ5</id>
    </interactant>
    <interactant intactId="EBI-2689908">
        <id>Q8IV08</id>
        <label>PLD3</label>
    </interactant>
    <organismsDiffer>false</organismsDiffer>
    <experiments>3</experiments>
</comment>
<comment type="interaction">
    <interactant intactId="EBI-8640191">
        <id>Q9NRQ5</id>
    </interactant>
    <interactant intactId="EBI-11161398">
        <id>O14684</id>
        <label>PTGES</label>
    </interactant>
    <organismsDiffer>false</organismsDiffer>
    <experiments>3</experiments>
</comment>
<comment type="interaction">
    <interactant intactId="EBI-8640191">
        <id>Q9NRQ5</id>
    </interactant>
    <interactant intactId="EBI-10192441">
        <id>Q86VR2</id>
        <label>RETREG3</label>
    </interactant>
    <organismsDiffer>false</organismsDiffer>
    <experiments>3</experiments>
</comment>
<comment type="interaction">
    <interactant intactId="EBI-8640191">
        <id>Q9NRQ5</id>
    </interactant>
    <interactant intactId="EBI-17247926">
        <id>Q9NY72</id>
        <label>SCN3B</label>
    </interactant>
    <organismsDiffer>false</organismsDiffer>
    <experiments>3</experiments>
</comment>
<comment type="interaction">
    <interactant intactId="EBI-8640191">
        <id>Q9NRQ5</id>
    </interactant>
    <interactant intactId="EBI-17595455">
        <id>P54219-3</id>
        <label>SLC18A1</label>
    </interactant>
    <organismsDiffer>false</organismsDiffer>
    <experiments>3</experiments>
</comment>
<comment type="interaction">
    <interactant intactId="EBI-8640191">
        <id>Q9NRQ5</id>
    </interactant>
    <interactant intactId="EBI-17295964">
        <id>Q9NQQ7-3</id>
        <label>SLC35C2</label>
    </interactant>
    <organismsDiffer>false</organismsDiffer>
    <experiments>3</experiments>
</comment>
<comment type="interaction">
    <interactant intactId="EBI-8640191">
        <id>Q9NRQ5</id>
    </interactant>
    <interactant intactId="EBI-7225508">
        <id>Q96GZ6</id>
        <label>SLC41A3</label>
    </interactant>
    <organismsDiffer>false</organismsDiffer>
    <experiments>3</experiments>
</comment>
<comment type="interaction">
    <interactant intactId="EBI-8640191">
        <id>Q9NRQ5</id>
    </interactant>
    <interactant intactId="EBI-4289564">
        <id>P30825</id>
        <label>SLC7A1</label>
    </interactant>
    <organismsDiffer>false</organismsDiffer>
    <experiments>3</experiments>
</comment>
<comment type="interaction">
    <interactant intactId="EBI-8640191">
        <id>Q9NRQ5</id>
    </interactant>
    <interactant intactId="EBI-5235586">
        <id>Q8TBB6</id>
        <label>SLC7A14</label>
    </interactant>
    <organismsDiffer>false</organismsDiffer>
    <experiments>3</experiments>
</comment>
<comment type="interaction">
    <interactant intactId="EBI-8640191">
        <id>Q9NRQ5</id>
    </interactant>
    <interactant intactId="EBI-741850">
        <id>Q9BZL3</id>
        <label>SMIM3</label>
    </interactant>
    <organismsDiffer>false</organismsDiffer>
    <experiments>5</experiments>
</comment>
<comment type="interaction">
    <interactant intactId="EBI-8640191">
        <id>Q9NRQ5</id>
    </interactant>
    <interactant intactId="EBI-12078338">
        <id>O43278-2</id>
        <label>SPINT1</label>
    </interactant>
    <organismsDiffer>false</organismsDiffer>
    <experiments>3</experiments>
</comment>
<comment type="interaction">
    <interactant intactId="EBI-8640191">
        <id>Q9NRQ5</id>
    </interactant>
    <interactant intactId="EBI-1211440">
        <id>P27105</id>
        <label>STOM</label>
    </interactant>
    <organismsDiffer>false</organismsDiffer>
    <experiments>3</experiments>
</comment>
<comment type="interaction">
    <interactant intactId="EBI-8640191">
        <id>Q9NRQ5</id>
    </interactant>
    <interactant intactId="EBI-18194029">
        <id>Q96L08</id>
        <label>SUSD3</label>
    </interactant>
    <organismsDiffer>false</organismsDiffer>
    <experiments>3</experiments>
</comment>
<comment type="interaction">
    <interactant intactId="EBI-8640191">
        <id>Q9NRQ5</id>
    </interactant>
    <interactant intactId="EBI-7131783">
        <id>Q8N205</id>
        <label>SYNE4</label>
    </interactant>
    <organismsDiffer>false</organismsDiffer>
    <experiments>3</experiments>
</comment>
<comment type="interaction">
    <interactant intactId="EBI-8640191">
        <id>Q9NRQ5</id>
    </interactant>
    <interactant intactId="EBI-12099160">
        <id>Q8N205-2</id>
        <label>SYNE4</label>
    </interactant>
    <organismsDiffer>false</organismsDiffer>
    <experiments>3</experiments>
</comment>
<comment type="interaction">
    <interactant intactId="EBI-8640191">
        <id>Q9NRQ5</id>
    </interactant>
    <interactant intactId="EBI-10273251">
        <id>Q8TBG9</id>
        <label>SYNPR</label>
    </interactant>
    <organismsDiffer>false</organismsDiffer>
    <experiments>3</experiments>
</comment>
<comment type="interaction">
    <interactant intactId="EBI-8640191">
        <id>Q9NRQ5</id>
    </interactant>
    <interactant intactId="EBI-19027521">
        <id>Q8N6K0</id>
        <label>TEX29</label>
    </interactant>
    <organismsDiffer>false</organismsDiffer>
    <experiments>3</experiments>
</comment>
<comment type="interaction">
    <interactant intactId="EBI-8640191">
        <id>Q9NRQ5</id>
    </interactant>
    <interactant intactId="EBI-12246506">
        <id>O14948-3</id>
        <label>TFEC</label>
    </interactant>
    <organismsDiffer>false</organismsDiffer>
    <experiments>3</experiments>
</comment>
<comment type="interaction">
    <interactant intactId="EBI-8640191">
        <id>Q9NRQ5</id>
    </interactant>
    <interactant intactId="EBI-7238458">
        <id>Q8IV31</id>
        <label>TMEM139</label>
    </interactant>
    <organismsDiffer>false</organismsDiffer>
    <experiments>3</experiments>
</comment>
<comment type="interaction">
    <interactant intactId="EBI-8640191">
        <id>Q9NRQ5</id>
    </interactant>
    <interactant intactId="EBI-11742770">
        <id>Q96HE8</id>
        <label>TMEM80</label>
    </interactant>
    <organismsDiffer>false</organismsDiffer>
    <experiments>3</experiments>
</comment>
<comment type="interaction">
    <interactant intactId="EBI-8640191">
        <id>Q9NRQ5</id>
    </interactant>
    <interactant intactId="EBI-6447886">
        <id>Q9Y320</id>
        <label>TMX2</label>
    </interactant>
    <organismsDiffer>false</organismsDiffer>
    <experiments>3</experiments>
</comment>
<comment type="interaction">
    <interactant intactId="EBI-8640191">
        <id>Q9NRQ5</id>
    </interactant>
    <interactant intactId="EBI-744988">
        <id>Q9H7M9</id>
        <label>VSIR</label>
    </interactant>
    <organismsDiffer>false</organismsDiffer>
    <experiments>3</experiments>
</comment>
<comment type="interaction">
    <interactant intactId="EBI-8640191">
        <id>Q9NRQ5</id>
    </interactant>
    <interactant intactId="EBI-3867685">
        <id>Q96G27</id>
        <label>WBP1</label>
    </interactant>
    <organismsDiffer>false</organismsDiffer>
    <experiments>3</experiments>
</comment>
<comment type="subcellular location">
    <subcellularLocation>
        <location evidence="3">Membrane</location>
        <topology evidence="3">Single-pass membrane protein</topology>
    </subcellularLocation>
</comment>
<comment type="similarity">
    <text evidence="3">Belongs to the SMCO4 family.</text>
</comment>
<accession>Q9NRQ5</accession>
<sequence length="59" mass="6738">MRQLKGKPKKETSKDKKERKQAMQEARQQITTVVLPTLAVVVLLIVVFVYVATRPTITE</sequence>
<dbReference type="EMBL" id="AF197137">
    <property type="protein sequence ID" value="AAF86046.1"/>
    <property type="molecule type" value="mRNA"/>
</dbReference>
<dbReference type="EMBL" id="AP004242">
    <property type="status" value="NOT_ANNOTATED_CDS"/>
    <property type="molecule type" value="Genomic_DNA"/>
</dbReference>
<dbReference type="EMBL" id="BC031564">
    <property type="protein sequence ID" value="AAH31564.1"/>
    <property type="molecule type" value="mRNA"/>
</dbReference>
<dbReference type="CCDS" id="CCDS8292.1"/>
<dbReference type="RefSeq" id="NP_064564.1">
    <property type="nucleotide sequence ID" value="NM_020179.3"/>
</dbReference>
<dbReference type="SMR" id="Q9NRQ5"/>
<dbReference type="BioGRID" id="121260">
    <property type="interactions" value="62"/>
</dbReference>
<dbReference type="FunCoup" id="Q9NRQ5">
    <property type="interactions" value="30"/>
</dbReference>
<dbReference type="IntAct" id="Q9NRQ5">
    <property type="interactions" value="56"/>
</dbReference>
<dbReference type="MINT" id="Q9NRQ5"/>
<dbReference type="STRING" id="9606.ENSP00000298966"/>
<dbReference type="BioMuta" id="SMCO4"/>
<dbReference type="DMDM" id="74734326"/>
<dbReference type="jPOST" id="Q9NRQ5"/>
<dbReference type="MassIVE" id="Q9NRQ5"/>
<dbReference type="PaxDb" id="9606-ENSP00000298966"/>
<dbReference type="PeptideAtlas" id="Q9NRQ5"/>
<dbReference type="ProteomicsDB" id="82405"/>
<dbReference type="TopDownProteomics" id="Q9NRQ5"/>
<dbReference type="Antibodypedia" id="65692">
    <property type="antibodies" value="18 antibodies from 9 providers"/>
</dbReference>
<dbReference type="DNASU" id="56935"/>
<dbReference type="Ensembl" id="ENST00000298966.7">
    <property type="protein sequence ID" value="ENSP00000298966.2"/>
    <property type="gene ID" value="ENSG00000166002.7"/>
</dbReference>
<dbReference type="Ensembl" id="ENST00000525141.1">
    <property type="protein sequence ID" value="ENSP00000431781.1"/>
    <property type="gene ID" value="ENSG00000166002.7"/>
</dbReference>
<dbReference type="Ensembl" id="ENST00000527149.5">
    <property type="protein sequence ID" value="ENSP00000433555.1"/>
    <property type="gene ID" value="ENSG00000166002.7"/>
</dbReference>
<dbReference type="Ensembl" id="ENST00000596676.2">
    <property type="protein sequence ID" value="ENSP00000479594.1"/>
    <property type="gene ID" value="ENSG00000166002.7"/>
</dbReference>
<dbReference type="GeneID" id="56935"/>
<dbReference type="KEGG" id="hsa:56935"/>
<dbReference type="MANE-Select" id="ENST00000298966.7">
    <property type="protein sequence ID" value="ENSP00000298966.2"/>
    <property type="RefSeq nucleotide sequence ID" value="NM_020179.3"/>
    <property type="RefSeq protein sequence ID" value="NP_064564.1"/>
</dbReference>
<dbReference type="UCSC" id="uc001pds.5">
    <property type="organism name" value="human"/>
</dbReference>
<dbReference type="AGR" id="HGNC:24810"/>
<dbReference type="CTD" id="56935"/>
<dbReference type="DisGeNET" id="56935"/>
<dbReference type="GeneCards" id="SMCO4"/>
<dbReference type="HGNC" id="HGNC:24810">
    <property type="gene designation" value="SMCO4"/>
</dbReference>
<dbReference type="HPA" id="ENSG00000166002">
    <property type="expression patterns" value="Tissue enhanced (salivary)"/>
</dbReference>
<dbReference type="MIM" id="609477">
    <property type="type" value="gene"/>
</dbReference>
<dbReference type="neXtProt" id="NX_Q9NRQ5"/>
<dbReference type="OpenTargets" id="ENSG00000166002"/>
<dbReference type="PharmGKB" id="PA144596494"/>
<dbReference type="VEuPathDB" id="HostDB:ENSG00000166002"/>
<dbReference type="eggNOG" id="ENOG502S7F4">
    <property type="taxonomic scope" value="Eukaryota"/>
</dbReference>
<dbReference type="GeneTree" id="ENSGT00390000015987"/>
<dbReference type="InParanoid" id="Q9NRQ5"/>
<dbReference type="OMA" id="FFIYANT"/>
<dbReference type="PAN-GO" id="Q9NRQ5">
    <property type="GO annotations" value="0 GO annotations based on evolutionary models"/>
</dbReference>
<dbReference type="TreeFam" id="TF324415"/>
<dbReference type="PathwayCommons" id="Q9NRQ5"/>
<dbReference type="SignaLink" id="Q9NRQ5"/>
<dbReference type="BioGRID-ORCS" id="56935">
    <property type="hits" value="15 hits in 1148 CRISPR screens"/>
</dbReference>
<dbReference type="ChiTaRS" id="SMCO4">
    <property type="organism name" value="human"/>
</dbReference>
<dbReference type="GenomeRNAi" id="56935"/>
<dbReference type="Pharos" id="Q9NRQ5">
    <property type="development level" value="Tdark"/>
</dbReference>
<dbReference type="PRO" id="PR:Q9NRQ5"/>
<dbReference type="Proteomes" id="UP000005640">
    <property type="component" value="Chromosome 11"/>
</dbReference>
<dbReference type="RNAct" id="Q9NRQ5">
    <property type="molecule type" value="protein"/>
</dbReference>
<dbReference type="Bgee" id="ENSG00000166002">
    <property type="expression patterns" value="Expressed in parotid gland and 175 other cell types or tissues"/>
</dbReference>
<dbReference type="ExpressionAtlas" id="Q9NRQ5">
    <property type="expression patterns" value="baseline and differential"/>
</dbReference>
<dbReference type="GO" id="GO:0016020">
    <property type="term" value="C:membrane"/>
    <property type="evidence" value="ECO:0007669"/>
    <property type="project" value="UniProtKB-SubCell"/>
</dbReference>
<dbReference type="InterPro" id="IPR027960">
    <property type="entry name" value="DUF4519"/>
</dbReference>
<dbReference type="PANTHER" id="PTHR34644">
    <property type="entry name" value="SINGLE-PASS MEMBRANE AND COILED-COIL DOMAIN-CONTAINING PROTEIN 4"/>
    <property type="match status" value="1"/>
</dbReference>
<dbReference type="PANTHER" id="PTHR34644:SF2">
    <property type="entry name" value="SINGLE-PASS MEMBRANE AND COILED-COIL DOMAIN-CONTAINING PROTEIN 4"/>
    <property type="match status" value="1"/>
</dbReference>
<dbReference type="Pfam" id="PF15012">
    <property type="entry name" value="DUF4519"/>
    <property type="match status" value="1"/>
</dbReference>
<feature type="chain" id="PRO_0000087319" description="Single-pass membrane and coiled-coil domain-containing protein 4">
    <location>
        <begin position="1"/>
        <end position="59"/>
    </location>
</feature>
<feature type="transmembrane region" description="Helical" evidence="1">
    <location>
        <begin position="32"/>
        <end position="52"/>
    </location>
</feature>
<feature type="region of interest" description="Disordered" evidence="2">
    <location>
        <begin position="1"/>
        <end position="23"/>
    </location>
</feature>
<feature type="coiled-coil region" evidence="1">
    <location>
        <begin position="9"/>
        <end position="31"/>
    </location>
</feature>
<feature type="compositionally biased region" description="Basic and acidic residues" evidence="2">
    <location>
        <begin position="9"/>
        <end position="22"/>
    </location>
</feature>
<reference key="1">
    <citation type="journal article" date="2000" name="Gene">
        <title>Characterization of the Fugu rubripes NLK and FN5 genes flanking the NF1 (Neurofibromatosis type 1) gene in the 5' direction and mapping of the human counterparts.</title>
        <authorList>
            <person name="Kehrer-Sawatzki H."/>
            <person name="Moschgath E."/>
            <person name="Maier C."/>
            <person name="Legius E."/>
            <person name="Elgar G."/>
            <person name="Krone W."/>
        </authorList>
    </citation>
    <scope>NUCLEOTIDE SEQUENCE [MRNA]</scope>
</reference>
<reference key="2">
    <citation type="journal article" date="2006" name="Nature">
        <title>Human chromosome 11 DNA sequence and analysis including novel gene identification.</title>
        <authorList>
            <person name="Taylor T.D."/>
            <person name="Noguchi H."/>
            <person name="Totoki Y."/>
            <person name="Toyoda A."/>
            <person name="Kuroki Y."/>
            <person name="Dewar K."/>
            <person name="Lloyd C."/>
            <person name="Itoh T."/>
            <person name="Takeda T."/>
            <person name="Kim D.-W."/>
            <person name="She X."/>
            <person name="Barlow K.F."/>
            <person name="Bloom T."/>
            <person name="Bruford E."/>
            <person name="Chang J.L."/>
            <person name="Cuomo C.A."/>
            <person name="Eichler E."/>
            <person name="FitzGerald M.G."/>
            <person name="Jaffe D.B."/>
            <person name="LaButti K."/>
            <person name="Nicol R."/>
            <person name="Park H.-S."/>
            <person name="Seaman C."/>
            <person name="Sougnez C."/>
            <person name="Yang X."/>
            <person name="Zimmer A.R."/>
            <person name="Zody M.C."/>
            <person name="Birren B.W."/>
            <person name="Nusbaum C."/>
            <person name="Fujiyama A."/>
            <person name="Hattori M."/>
            <person name="Rogers J."/>
            <person name="Lander E.S."/>
            <person name="Sakaki Y."/>
        </authorList>
    </citation>
    <scope>NUCLEOTIDE SEQUENCE [LARGE SCALE GENOMIC DNA]</scope>
</reference>
<reference key="3">
    <citation type="journal article" date="2004" name="Genome Res.">
        <title>The status, quality, and expansion of the NIH full-length cDNA project: the Mammalian Gene Collection (MGC).</title>
        <authorList>
            <consortium name="The MGC Project Team"/>
        </authorList>
    </citation>
    <scope>NUCLEOTIDE SEQUENCE [LARGE SCALE MRNA]</scope>
    <source>
        <tissue>Colon</tissue>
    </source>
</reference>
<protein>
    <recommendedName>
        <fullName>Single-pass membrane and coiled-coil domain-containing protein 4</fullName>
    </recommendedName>
    <alternativeName>
        <fullName>Protein FN5</fullName>
    </alternativeName>
</protein>
<proteinExistence type="evidence at protein level"/>
<evidence type="ECO:0000255" key="1"/>
<evidence type="ECO:0000256" key="2">
    <source>
        <dbReference type="SAM" id="MobiDB-lite"/>
    </source>
</evidence>
<evidence type="ECO:0000305" key="3"/>
<keyword id="KW-0175">Coiled coil</keyword>
<keyword id="KW-0472">Membrane</keyword>
<keyword id="KW-1185">Reference proteome</keyword>
<keyword id="KW-0812">Transmembrane</keyword>
<keyword id="KW-1133">Transmembrane helix</keyword>